<name>CLPX_TREPS</name>
<organism>
    <name type="scientific">Treponema pallidum subsp. pallidum (strain SS14)</name>
    <dbReference type="NCBI Taxonomy" id="455434"/>
    <lineage>
        <taxon>Bacteria</taxon>
        <taxon>Pseudomonadati</taxon>
        <taxon>Spirochaetota</taxon>
        <taxon>Spirochaetia</taxon>
        <taxon>Spirochaetales</taxon>
        <taxon>Treponemataceae</taxon>
        <taxon>Treponema</taxon>
    </lineage>
</organism>
<comment type="function">
    <text evidence="1">ATP-dependent specificity component of the Clp protease. It directs the protease to specific substrates. Can perform chaperone functions in the absence of ClpP.</text>
</comment>
<comment type="subunit">
    <text evidence="1">Component of the ClpX-ClpP complex. Forms a hexameric ring that, in the presence of ATP, binds to fourteen ClpP subunits assembled into a disk-like structure with a central cavity, resembling the structure of eukaryotic proteasomes.</text>
</comment>
<comment type="similarity">
    <text evidence="1">Belongs to the ClpX chaperone family.</text>
</comment>
<keyword id="KW-0067">ATP-binding</keyword>
<keyword id="KW-0143">Chaperone</keyword>
<keyword id="KW-0479">Metal-binding</keyword>
<keyword id="KW-0547">Nucleotide-binding</keyword>
<keyword id="KW-0862">Zinc</keyword>
<accession>B2S3A2</accession>
<protein>
    <recommendedName>
        <fullName evidence="1">ATP-dependent Clp protease ATP-binding subunit ClpX</fullName>
    </recommendedName>
</protein>
<sequence>MLRSKGDLVLGCSFCGKKEDERRRIVTGHGVSICNYCVERCAEYLRDRKPSALALMTKEEIPTPLELKAYLDQYVIGQDLAKRVLSVAVYNHYKRVAGRSLDIDSVLIEKSNVLLIGPTGSGKTLLAKTLSQKMKVPFAIADATTLTEAGYVGEDVENILLKLVQNANGDVALAERGIIFIDEIDKISRKSENVSITRDVSGEGVQQALLKIIEGTIASVPPQGGRKHPNQDMLRVDTSNILFICGGAFVGLDGIVGTRVCKNPVGFGADVKTVKERGLQLMHEDVIPDDLVKFGLIPEIIGRLPVTVALDALSKEDLRNILVRPRNAIVRQFEALFALDDVRLVFDEDALDAIAQQAIDQKTGARGLRSIVERLMLDAMFEAPSLKGKKELCITKKVVTQEEKASVRLVSERTA</sequence>
<gene>
    <name evidence="1" type="primary">clpX</name>
    <name type="ordered locus">TPASS_0508</name>
</gene>
<proteinExistence type="inferred from homology"/>
<feature type="chain" id="PRO_1000098014" description="ATP-dependent Clp protease ATP-binding subunit ClpX">
    <location>
        <begin position="1"/>
        <end position="415"/>
    </location>
</feature>
<feature type="domain" description="ClpX-type ZB" evidence="2">
    <location>
        <begin position="1"/>
        <end position="53"/>
    </location>
</feature>
<feature type="binding site" evidence="2">
    <location>
        <position position="12"/>
    </location>
    <ligand>
        <name>Zn(2+)</name>
        <dbReference type="ChEBI" id="CHEBI:29105"/>
    </ligand>
</feature>
<feature type="binding site" evidence="2">
    <location>
        <position position="15"/>
    </location>
    <ligand>
        <name>Zn(2+)</name>
        <dbReference type="ChEBI" id="CHEBI:29105"/>
    </ligand>
</feature>
<feature type="binding site" evidence="2">
    <location>
        <position position="34"/>
    </location>
    <ligand>
        <name>Zn(2+)</name>
        <dbReference type="ChEBI" id="CHEBI:29105"/>
    </ligand>
</feature>
<feature type="binding site" evidence="2">
    <location>
        <position position="37"/>
    </location>
    <ligand>
        <name>Zn(2+)</name>
        <dbReference type="ChEBI" id="CHEBI:29105"/>
    </ligand>
</feature>
<feature type="binding site" evidence="1">
    <location>
        <begin position="118"/>
        <end position="125"/>
    </location>
    <ligand>
        <name>ATP</name>
        <dbReference type="ChEBI" id="CHEBI:30616"/>
    </ligand>
</feature>
<evidence type="ECO:0000255" key="1">
    <source>
        <dbReference type="HAMAP-Rule" id="MF_00175"/>
    </source>
</evidence>
<evidence type="ECO:0000255" key="2">
    <source>
        <dbReference type="PROSITE-ProRule" id="PRU01250"/>
    </source>
</evidence>
<reference key="1">
    <citation type="journal article" date="2008" name="BMC Microbiol.">
        <title>Complete genome sequence of Treponema pallidum ssp. pallidum strain SS14 determined with oligonucleotide arrays.</title>
        <authorList>
            <person name="Matejkova P."/>
            <person name="Strouhal M."/>
            <person name="Smajs D."/>
            <person name="Norris S.J."/>
            <person name="Palzkill T."/>
            <person name="Petrosino J.F."/>
            <person name="Sodergren E."/>
            <person name="Norton J.E."/>
            <person name="Singh J."/>
            <person name="Richmond T.A."/>
            <person name="Molla M.N."/>
            <person name="Albert T.J."/>
            <person name="Weinstock G.M."/>
        </authorList>
    </citation>
    <scope>NUCLEOTIDE SEQUENCE [LARGE SCALE GENOMIC DNA]</scope>
    <source>
        <strain>SS14</strain>
    </source>
</reference>
<dbReference type="EMBL" id="CP000805">
    <property type="protein sequence ID" value="ACD70931.1"/>
    <property type="molecule type" value="Genomic_DNA"/>
</dbReference>
<dbReference type="RefSeq" id="WP_010881957.1">
    <property type="nucleotide sequence ID" value="NC_021508.1"/>
</dbReference>
<dbReference type="SMR" id="B2S3A2"/>
<dbReference type="GeneID" id="93876277"/>
<dbReference type="KEGG" id="tpp:TPASS_0508"/>
<dbReference type="PATRIC" id="fig|455434.6.peg.505"/>
<dbReference type="Proteomes" id="UP000001202">
    <property type="component" value="Chromosome"/>
</dbReference>
<dbReference type="GO" id="GO:0009376">
    <property type="term" value="C:HslUV protease complex"/>
    <property type="evidence" value="ECO:0007669"/>
    <property type="project" value="TreeGrafter"/>
</dbReference>
<dbReference type="GO" id="GO:0005524">
    <property type="term" value="F:ATP binding"/>
    <property type="evidence" value="ECO:0007669"/>
    <property type="project" value="UniProtKB-UniRule"/>
</dbReference>
<dbReference type="GO" id="GO:0016887">
    <property type="term" value="F:ATP hydrolysis activity"/>
    <property type="evidence" value="ECO:0007669"/>
    <property type="project" value="InterPro"/>
</dbReference>
<dbReference type="GO" id="GO:0140662">
    <property type="term" value="F:ATP-dependent protein folding chaperone"/>
    <property type="evidence" value="ECO:0007669"/>
    <property type="project" value="InterPro"/>
</dbReference>
<dbReference type="GO" id="GO:0046983">
    <property type="term" value="F:protein dimerization activity"/>
    <property type="evidence" value="ECO:0007669"/>
    <property type="project" value="InterPro"/>
</dbReference>
<dbReference type="GO" id="GO:0051082">
    <property type="term" value="F:unfolded protein binding"/>
    <property type="evidence" value="ECO:0007669"/>
    <property type="project" value="UniProtKB-UniRule"/>
</dbReference>
<dbReference type="GO" id="GO:0008270">
    <property type="term" value="F:zinc ion binding"/>
    <property type="evidence" value="ECO:0007669"/>
    <property type="project" value="InterPro"/>
</dbReference>
<dbReference type="GO" id="GO:0051301">
    <property type="term" value="P:cell division"/>
    <property type="evidence" value="ECO:0007669"/>
    <property type="project" value="TreeGrafter"/>
</dbReference>
<dbReference type="GO" id="GO:0051603">
    <property type="term" value="P:proteolysis involved in protein catabolic process"/>
    <property type="evidence" value="ECO:0007669"/>
    <property type="project" value="TreeGrafter"/>
</dbReference>
<dbReference type="CDD" id="cd19497">
    <property type="entry name" value="RecA-like_ClpX"/>
    <property type="match status" value="1"/>
</dbReference>
<dbReference type="FunFam" id="1.10.8.60:FF:000002">
    <property type="entry name" value="ATP-dependent Clp protease ATP-binding subunit ClpX"/>
    <property type="match status" value="1"/>
</dbReference>
<dbReference type="FunFam" id="3.40.50.300:FF:000005">
    <property type="entry name" value="ATP-dependent Clp protease ATP-binding subunit ClpX"/>
    <property type="match status" value="1"/>
</dbReference>
<dbReference type="Gene3D" id="1.10.8.60">
    <property type="match status" value="1"/>
</dbReference>
<dbReference type="Gene3D" id="6.20.220.10">
    <property type="entry name" value="ClpX chaperone, C4-type zinc finger domain"/>
    <property type="match status" value="1"/>
</dbReference>
<dbReference type="Gene3D" id="3.40.50.300">
    <property type="entry name" value="P-loop containing nucleotide triphosphate hydrolases"/>
    <property type="match status" value="1"/>
</dbReference>
<dbReference type="HAMAP" id="MF_00175">
    <property type="entry name" value="ClpX"/>
    <property type="match status" value="1"/>
</dbReference>
<dbReference type="InterPro" id="IPR003593">
    <property type="entry name" value="AAA+_ATPase"/>
</dbReference>
<dbReference type="InterPro" id="IPR050052">
    <property type="entry name" value="ATP-dep_Clp_protease_ClpX"/>
</dbReference>
<dbReference type="InterPro" id="IPR003959">
    <property type="entry name" value="ATPase_AAA_core"/>
</dbReference>
<dbReference type="InterPro" id="IPR019489">
    <property type="entry name" value="Clp_ATPase_C"/>
</dbReference>
<dbReference type="InterPro" id="IPR004487">
    <property type="entry name" value="Clp_protease_ATP-bd_su_ClpX"/>
</dbReference>
<dbReference type="InterPro" id="IPR046425">
    <property type="entry name" value="ClpX_bact"/>
</dbReference>
<dbReference type="InterPro" id="IPR027417">
    <property type="entry name" value="P-loop_NTPase"/>
</dbReference>
<dbReference type="InterPro" id="IPR010603">
    <property type="entry name" value="Znf_CppX_C4"/>
</dbReference>
<dbReference type="InterPro" id="IPR038366">
    <property type="entry name" value="Znf_CppX_C4_sf"/>
</dbReference>
<dbReference type="NCBIfam" id="TIGR00382">
    <property type="entry name" value="clpX"/>
    <property type="match status" value="1"/>
</dbReference>
<dbReference type="NCBIfam" id="NF003745">
    <property type="entry name" value="PRK05342.1"/>
    <property type="match status" value="1"/>
</dbReference>
<dbReference type="PANTHER" id="PTHR48102:SF7">
    <property type="entry name" value="ATP-DEPENDENT CLP PROTEASE ATP-BINDING SUBUNIT CLPX-LIKE, MITOCHONDRIAL"/>
    <property type="match status" value="1"/>
</dbReference>
<dbReference type="PANTHER" id="PTHR48102">
    <property type="entry name" value="ATP-DEPENDENT CLP PROTEASE ATP-BINDING SUBUNIT CLPX-LIKE, MITOCHONDRIAL-RELATED"/>
    <property type="match status" value="1"/>
</dbReference>
<dbReference type="Pfam" id="PF07724">
    <property type="entry name" value="AAA_2"/>
    <property type="match status" value="1"/>
</dbReference>
<dbReference type="Pfam" id="PF10431">
    <property type="entry name" value="ClpB_D2-small"/>
    <property type="match status" value="1"/>
</dbReference>
<dbReference type="Pfam" id="PF06689">
    <property type="entry name" value="zf-C4_ClpX"/>
    <property type="match status" value="1"/>
</dbReference>
<dbReference type="SMART" id="SM00382">
    <property type="entry name" value="AAA"/>
    <property type="match status" value="1"/>
</dbReference>
<dbReference type="SMART" id="SM01086">
    <property type="entry name" value="ClpB_D2-small"/>
    <property type="match status" value="1"/>
</dbReference>
<dbReference type="SMART" id="SM00994">
    <property type="entry name" value="zf-C4_ClpX"/>
    <property type="match status" value="1"/>
</dbReference>
<dbReference type="SUPFAM" id="SSF57716">
    <property type="entry name" value="Glucocorticoid receptor-like (DNA-binding domain)"/>
    <property type="match status" value="1"/>
</dbReference>
<dbReference type="SUPFAM" id="SSF52540">
    <property type="entry name" value="P-loop containing nucleoside triphosphate hydrolases"/>
    <property type="match status" value="1"/>
</dbReference>
<dbReference type="PROSITE" id="PS51902">
    <property type="entry name" value="CLPX_ZB"/>
    <property type="match status" value="1"/>
</dbReference>